<gene>
    <name type="primary">ANP1</name>
    <name type="ordered locus">At1g09000</name>
    <name type="ORF">F7G19.13</name>
</gene>
<reference key="1">
    <citation type="journal article" date="1997" name="Plant J.">
        <title>Possible involvement of differential splicing in regulation of the activity of Arabidopsis ANP1 that is related to mitogen-activated protein kinase kinase kinases (MAPKKKs).</title>
        <authorList>
            <person name="Nishihama R."/>
            <person name="Banno H."/>
            <person name="Kawahara E."/>
            <person name="Irie K."/>
            <person name="Machida Y."/>
        </authorList>
    </citation>
    <scope>NUCLEOTIDE SEQUENCE [MRNA] (ISOFORMS 1S AND 1L)</scope>
    <scope>TISSUE SPECIFICITY</scope>
    <source>
        <strain>cv. Columbia</strain>
    </source>
</reference>
<reference key="2">
    <citation type="journal article" date="2000" name="Nature">
        <title>Sequence and analysis of chromosome 1 of the plant Arabidopsis thaliana.</title>
        <authorList>
            <person name="Theologis A."/>
            <person name="Ecker J.R."/>
            <person name="Palm C.J."/>
            <person name="Federspiel N.A."/>
            <person name="Kaul S."/>
            <person name="White O."/>
            <person name="Alonso J."/>
            <person name="Altafi H."/>
            <person name="Araujo R."/>
            <person name="Bowman C.L."/>
            <person name="Brooks S.Y."/>
            <person name="Buehler E."/>
            <person name="Chan A."/>
            <person name="Chao Q."/>
            <person name="Chen H."/>
            <person name="Cheuk R.F."/>
            <person name="Chin C.W."/>
            <person name="Chung M.K."/>
            <person name="Conn L."/>
            <person name="Conway A.B."/>
            <person name="Conway A.R."/>
            <person name="Creasy T.H."/>
            <person name="Dewar K."/>
            <person name="Dunn P."/>
            <person name="Etgu P."/>
            <person name="Feldblyum T.V."/>
            <person name="Feng J.-D."/>
            <person name="Fong B."/>
            <person name="Fujii C.Y."/>
            <person name="Gill J.E."/>
            <person name="Goldsmith A.D."/>
            <person name="Haas B."/>
            <person name="Hansen N.F."/>
            <person name="Hughes B."/>
            <person name="Huizar L."/>
            <person name="Hunter J.L."/>
            <person name="Jenkins J."/>
            <person name="Johnson-Hopson C."/>
            <person name="Khan S."/>
            <person name="Khaykin E."/>
            <person name="Kim C.J."/>
            <person name="Koo H.L."/>
            <person name="Kremenetskaia I."/>
            <person name="Kurtz D.B."/>
            <person name="Kwan A."/>
            <person name="Lam B."/>
            <person name="Langin-Hooper S."/>
            <person name="Lee A."/>
            <person name="Lee J.M."/>
            <person name="Lenz C.A."/>
            <person name="Li J.H."/>
            <person name="Li Y.-P."/>
            <person name="Lin X."/>
            <person name="Liu S.X."/>
            <person name="Liu Z.A."/>
            <person name="Luros J.S."/>
            <person name="Maiti R."/>
            <person name="Marziali A."/>
            <person name="Militscher J."/>
            <person name="Miranda M."/>
            <person name="Nguyen M."/>
            <person name="Nierman W.C."/>
            <person name="Osborne B.I."/>
            <person name="Pai G."/>
            <person name="Peterson J."/>
            <person name="Pham P.K."/>
            <person name="Rizzo M."/>
            <person name="Rooney T."/>
            <person name="Rowley D."/>
            <person name="Sakano H."/>
            <person name="Salzberg S.L."/>
            <person name="Schwartz J.R."/>
            <person name="Shinn P."/>
            <person name="Southwick A.M."/>
            <person name="Sun H."/>
            <person name="Tallon L.J."/>
            <person name="Tambunga G."/>
            <person name="Toriumi M.J."/>
            <person name="Town C.D."/>
            <person name="Utterback T."/>
            <person name="Van Aken S."/>
            <person name="Vaysberg M."/>
            <person name="Vysotskaia V.S."/>
            <person name="Walker M."/>
            <person name="Wu D."/>
            <person name="Yu G."/>
            <person name="Fraser C.M."/>
            <person name="Venter J.C."/>
            <person name="Davis R.W."/>
        </authorList>
    </citation>
    <scope>NUCLEOTIDE SEQUENCE [LARGE SCALE GENOMIC DNA]</scope>
    <source>
        <strain>cv. Columbia</strain>
    </source>
</reference>
<reference key="3">
    <citation type="journal article" date="2017" name="Plant J.">
        <title>Araport11: a complete reannotation of the Arabidopsis thaliana reference genome.</title>
        <authorList>
            <person name="Cheng C.Y."/>
            <person name="Krishnakumar V."/>
            <person name="Chan A.P."/>
            <person name="Thibaud-Nissen F."/>
            <person name="Schobel S."/>
            <person name="Town C.D."/>
        </authorList>
    </citation>
    <scope>GENOME REANNOTATION</scope>
    <source>
        <strain>cv. Columbia</strain>
    </source>
</reference>
<reference key="4">
    <citation type="journal article" date="2002" name="Science">
        <title>Functional annotation of a full-length Arabidopsis cDNA collection.</title>
        <authorList>
            <person name="Seki M."/>
            <person name="Narusaka M."/>
            <person name="Kamiya A."/>
            <person name="Ishida J."/>
            <person name="Satou M."/>
            <person name="Sakurai T."/>
            <person name="Nakajima M."/>
            <person name="Enju A."/>
            <person name="Akiyama K."/>
            <person name="Oono Y."/>
            <person name="Muramatsu M."/>
            <person name="Hayashizaki Y."/>
            <person name="Kawai J."/>
            <person name="Carninci P."/>
            <person name="Itoh M."/>
            <person name="Ishii Y."/>
            <person name="Arakawa T."/>
            <person name="Shibata K."/>
            <person name="Shinagawa A."/>
            <person name="Shinozaki K."/>
        </authorList>
    </citation>
    <scope>NUCLEOTIDE SEQUENCE [LARGE SCALE MRNA] (ISOFORM 1L)</scope>
    <source>
        <strain>cv. Columbia</strain>
    </source>
</reference>
<reference key="5">
    <citation type="journal article" date="2003" name="Science">
        <title>Empirical analysis of transcriptional activity in the Arabidopsis genome.</title>
        <authorList>
            <person name="Yamada K."/>
            <person name="Lim J."/>
            <person name="Dale J.M."/>
            <person name="Chen H."/>
            <person name="Shinn P."/>
            <person name="Palm C.J."/>
            <person name="Southwick A.M."/>
            <person name="Wu H.C."/>
            <person name="Kim C.J."/>
            <person name="Nguyen M."/>
            <person name="Pham P.K."/>
            <person name="Cheuk R.F."/>
            <person name="Karlin-Newmann G."/>
            <person name="Liu S.X."/>
            <person name="Lam B."/>
            <person name="Sakano H."/>
            <person name="Wu T."/>
            <person name="Yu G."/>
            <person name="Miranda M."/>
            <person name="Quach H.L."/>
            <person name="Tripp M."/>
            <person name="Chang C.H."/>
            <person name="Lee J.M."/>
            <person name="Toriumi M.J."/>
            <person name="Chan M.M."/>
            <person name="Tang C.C."/>
            <person name="Onodera C.S."/>
            <person name="Deng J.M."/>
            <person name="Akiyama K."/>
            <person name="Ansari Y."/>
            <person name="Arakawa T."/>
            <person name="Banh J."/>
            <person name="Banno F."/>
            <person name="Bowser L."/>
            <person name="Brooks S.Y."/>
            <person name="Carninci P."/>
            <person name="Chao Q."/>
            <person name="Choy N."/>
            <person name="Enju A."/>
            <person name="Goldsmith A.D."/>
            <person name="Gurjal M."/>
            <person name="Hansen N.F."/>
            <person name="Hayashizaki Y."/>
            <person name="Johnson-Hopson C."/>
            <person name="Hsuan V.W."/>
            <person name="Iida K."/>
            <person name="Karnes M."/>
            <person name="Khan S."/>
            <person name="Koesema E."/>
            <person name="Ishida J."/>
            <person name="Jiang P.X."/>
            <person name="Jones T."/>
            <person name="Kawai J."/>
            <person name="Kamiya A."/>
            <person name="Meyers C."/>
            <person name="Nakajima M."/>
            <person name="Narusaka M."/>
            <person name="Seki M."/>
            <person name="Sakurai T."/>
            <person name="Satou M."/>
            <person name="Tamse R."/>
            <person name="Vaysberg M."/>
            <person name="Wallender E.K."/>
            <person name="Wong C."/>
            <person name="Yamamura Y."/>
            <person name="Yuan S."/>
            <person name="Shinozaki K."/>
            <person name="Davis R.W."/>
            <person name="Theologis A."/>
            <person name="Ecker J.R."/>
        </authorList>
    </citation>
    <scope>NUCLEOTIDE SEQUENCE [LARGE SCALE MRNA] (ISOFORM 1L)</scope>
    <source>
        <strain>cv. Columbia</strain>
    </source>
</reference>
<reference key="6">
    <citation type="journal article" date="2000" name="Proc. Natl. Acad. Sci. U.S.A.">
        <title>Functional analysis of oxidative stress-activated mitogen-activated protein kinase cascade in plants.</title>
        <authorList>
            <person name="Kovtun Y."/>
            <person name="Chiu W.-L."/>
            <person name="Tena G."/>
            <person name="Sheen J."/>
        </authorList>
    </citation>
    <scope>FUNCTION</scope>
    <scope>ACTIVITY REGULATION</scope>
    <scope>MUTAGENESIS OF LYS-98</scope>
</reference>
<reference key="7">
    <citation type="journal article" date="2002" name="Plant Cell">
        <title>An Arabidopsis mitogen-activated protein kinase kinase kinase gene family encodes essential positive regulators of cytokinesis.</title>
        <authorList>
            <person name="Krysan P.J."/>
            <person name="Jester P.J."/>
            <person name="Gottwald J.R."/>
            <person name="Sussman M.R."/>
        </authorList>
    </citation>
    <scope>FUNCTION</scope>
</reference>
<reference key="8">
    <citation type="journal article" date="2002" name="Trends Plant Sci.">
        <title>Mitogen-activated protein kinase cascades in plants: a new nomenclature.</title>
        <authorList>
            <consortium name="MAPK group"/>
        </authorList>
    </citation>
    <scope>NOMENCLATURE</scope>
</reference>
<proteinExistence type="evidence at protein level"/>
<evidence type="ECO:0000250" key="1">
    <source>
        <dbReference type="UniProtKB" id="O22042"/>
    </source>
</evidence>
<evidence type="ECO:0000255" key="2"/>
<evidence type="ECO:0000255" key="3">
    <source>
        <dbReference type="PROSITE-ProRule" id="PRU00159"/>
    </source>
</evidence>
<evidence type="ECO:0000255" key="4">
    <source>
        <dbReference type="PROSITE-ProRule" id="PRU10027"/>
    </source>
</evidence>
<evidence type="ECO:0000256" key="5">
    <source>
        <dbReference type="SAM" id="MobiDB-lite"/>
    </source>
</evidence>
<evidence type="ECO:0000269" key="6">
    <source>
    </source>
</evidence>
<evidence type="ECO:0000269" key="7">
    <source>
    </source>
</evidence>
<evidence type="ECO:0000269" key="8">
    <source>
    </source>
</evidence>
<evidence type="ECO:0000303" key="9">
    <source>
    </source>
</evidence>
<evidence type="ECO:0000305" key="10"/>
<protein>
    <recommendedName>
        <fullName>Mitogen-activated protein kinase kinase kinase ANP1</fullName>
        <ecNumber>2.7.11.25</ecNumber>
    </recommendedName>
    <alternativeName>
        <fullName>Arabidopsis NPK1-related kinase 1</fullName>
    </alternativeName>
</protein>
<dbReference type="EC" id="2.7.11.25"/>
<dbReference type="EMBL" id="AB000796">
    <property type="protein sequence ID" value="BAA21854.1"/>
    <property type="molecule type" value="mRNA"/>
</dbReference>
<dbReference type="EMBL" id="AB000797">
    <property type="protein sequence ID" value="BAA21855.1"/>
    <property type="molecule type" value="mRNA"/>
</dbReference>
<dbReference type="EMBL" id="AC000106">
    <property type="protein sequence ID" value="AAB70419.1"/>
    <property type="status" value="ALT_SEQ"/>
    <property type="molecule type" value="Genomic_DNA"/>
</dbReference>
<dbReference type="EMBL" id="CP002684">
    <property type="protein sequence ID" value="AEE28381.1"/>
    <property type="molecule type" value="Genomic_DNA"/>
</dbReference>
<dbReference type="EMBL" id="AK117282">
    <property type="protein sequence ID" value="BAC41954.1"/>
    <property type="molecule type" value="mRNA"/>
</dbReference>
<dbReference type="EMBL" id="BT005949">
    <property type="protein sequence ID" value="AAO64884.1"/>
    <property type="molecule type" value="mRNA"/>
</dbReference>
<dbReference type="PIR" id="H86221">
    <property type="entry name" value="H86221"/>
</dbReference>
<dbReference type="RefSeq" id="NP_563832.2">
    <molecule id="O22040-1"/>
    <property type="nucleotide sequence ID" value="NM_100771.4"/>
</dbReference>
<dbReference type="SMR" id="O22040"/>
<dbReference type="BioGRID" id="22662">
    <property type="interactions" value="2"/>
</dbReference>
<dbReference type="FunCoup" id="O22040">
    <property type="interactions" value="623"/>
</dbReference>
<dbReference type="STRING" id="3702.O22040"/>
<dbReference type="PaxDb" id="3702-AT1G09000.1"/>
<dbReference type="ProteomicsDB" id="244449">
    <molecule id="O22040-1"/>
</dbReference>
<dbReference type="EnsemblPlants" id="AT1G09000.1">
    <molecule id="O22040-1"/>
    <property type="protein sequence ID" value="AT1G09000.1"/>
    <property type="gene ID" value="AT1G09000"/>
</dbReference>
<dbReference type="GeneID" id="837421"/>
<dbReference type="Gramene" id="AT1G09000.1">
    <molecule id="O22040-1"/>
    <property type="protein sequence ID" value="AT1G09000.1"/>
    <property type="gene ID" value="AT1G09000"/>
</dbReference>
<dbReference type="KEGG" id="ath:AT1G09000"/>
<dbReference type="Araport" id="AT1G09000"/>
<dbReference type="TAIR" id="AT1G09000">
    <property type="gene designation" value="NP1"/>
</dbReference>
<dbReference type="eggNOG" id="KOG0198">
    <property type="taxonomic scope" value="Eukaryota"/>
</dbReference>
<dbReference type="HOGENOM" id="CLU_020952_1_0_1"/>
<dbReference type="InParanoid" id="O22040"/>
<dbReference type="PhylomeDB" id="O22040"/>
<dbReference type="PRO" id="PR:O22040"/>
<dbReference type="Proteomes" id="UP000006548">
    <property type="component" value="Chromosome 1"/>
</dbReference>
<dbReference type="ExpressionAtlas" id="O22040">
    <property type="expression patterns" value="baseline and differential"/>
</dbReference>
<dbReference type="GO" id="GO:0005524">
    <property type="term" value="F:ATP binding"/>
    <property type="evidence" value="ECO:0007669"/>
    <property type="project" value="UniProtKB-KW"/>
</dbReference>
<dbReference type="GO" id="GO:0004709">
    <property type="term" value="F:MAP kinase kinase kinase activity"/>
    <property type="evidence" value="ECO:0000250"/>
    <property type="project" value="TAIR"/>
</dbReference>
<dbReference type="GO" id="GO:0106310">
    <property type="term" value="F:protein serine kinase activity"/>
    <property type="evidence" value="ECO:0007669"/>
    <property type="project" value="RHEA"/>
</dbReference>
<dbReference type="GO" id="GO:0004674">
    <property type="term" value="F:protein serine/threonine kinase activity"/>
    <property type="evidence" value="ECO:0007005"/>
    <property type="project" value="TAIR"/>
</dbReference>
<dbReference type="GO" id="GO:0046777">
    <property type="term" value="P:protein autophosphorylation"/>
    <property type="evidence" value="ECO:0007005"/>
    <property type="project" value="TAIR"/>
</dbReference>
<dbReference type="GO" id="GO:0006979">
    <property type="term" value="P:response to oxidative stress"/>
    <property type="evidence" value="ECO:0000314"/>
    <property type="project" value="TAIR"/>
</dbReference>
<dbReference type="CDD" id="cd06606">
    <property type="entry name" value="STKc_MAPKKK"/>
    <property type="match status" value="1"/>
</dbReference>
<dbReference type="FunFam" id="1.10.510.10:FF:000382">
    <property type="entry name" value="Mitogen-activated protein kinase kinase kinase 2"/>
    <property type="match status" value="1"/>
</dbReference>
<dbReference type="FunFam" id="3.30.200.20:FF:000387">
    <property type="entry name" value="Serine/threonine-protein kinase STE11"/>
    <property type="match status" value="1"/>
</dbReference>
<dbReference type="Gene3D" id="1.10.510.10">
    <property type="entry name" value="Transferase(Phosphotransferase) domain 1"/>
    <property type="match status" value="1"/>
</dbReference>
<dbReference type="InterPro" id="IPR011009">
    <property type="entry name" value="Kinase-like_dom_sf"/>
</dbReference>
<dbReference type="InterPro" id="IPR050538">
    <property type="entry name" value="MAP_kinase_kinase_kinase"/>
</dbReference>
<dbReference type="InterPro" id="IPR000719">
    <property type="entry name" value="Prot_kinase_dom"/>
</dbReference>
<dbReference type="InterPro" id="IPR017441">
    <property type="entry name" value="Protein_kinase_ATP_BS"/>
</dbReference>
<dbReference type="InterPro" id="IPR008271">
    <property type="entry name" value="Ser/Thr_kinase_AS"/>
</dbReference>
<dbReference type="PANTHER" id="PTHR48016">
    <property type="entry name" value="MAP KINASE KINASE KINASE SSK2-RELATED-RELATED"/>
    <property type="match status" value="1"/>
</dbReference>
<dbReference type="PANTHER" id="PTHR48016:SF56">
    <property type="entry name" value="MAPKK KINASE"/>
    <property type="match status" value="1"/>
</dbReference>
<dbReference type="Pfam" id="PF00069">
    <property type="entry name" value="Pkinase"/>
    <property type="match status" value="1"/>
</dbReference>
<dbReference type="SMART" id="SM00220">
    <property type="entry name" value="S_TKc"/>
    <property type="match status" value="1"/>
</dbReference>
<dbReference type="SUPFAM" id="SSF56112">
    <property type="entry name" value="Protein kinase-like (PK-like)"/>
    <property type="match status" value="1"/>
</dbReference>
<dbReference type="PROSITE" id="PS00107">
    <property type="entry name" value="PROTEIN_KINASE_ATP"/>
    <property type="match status" value="1"/>
</dbReference>
<dbReference type="PROSITE" id="PS50011">
    <property type="entry name" value="PROTEIN_KINASE_DOM"/>
    <property type="match status" value="1"/>
</dbReference>
<dbReference type="PROSITE" id="PS00108">
    <property type="entry name" value="PROTEIN_KINASE_ST"/>
    <property type="match status" value="1"/>
</dbReference>
<keyword id="KW-0025">Alternative splicing</keyword>
<keyword id="KW-0067">ATP-binding</keyword>
<keyword id="KW-0175">Coiled coil</keyword>
<keyword id="KW-1017">Isopeptide bond</keyword>
<keyword id="KW-0418">Kinase</keyword>
<keyword id="KW-0547">Nucleotide-binding</keyword>
<keyword id="KW-1185">Reference proteome</keyword>
<keyword id="KW-0723">Serine/threonine-protein kinase</keyword>
<keyword id="KW-0808">Transferase</keyword>
<keyword id="KW-0832">Ubl conjugation</keyword>
<accession>O22040</accession>
<accession>O04030</accession>
<accession>O22039</accession>
<accession>Q8GZ05</accession>
<comment type="function">
    <text evidence="6 7">May be involved in an oxidative stress-mediated signaling cascade that phosphorylates downstream MAP kinases MPK3 and MPK6. May suppress auxin signaling that promotes cell cycle. Functionally redundant to ANP2 and ANP3 in the positive regulation of cytokinesis.</text>
</comment>
<comment type="catalytic activity">
    <reaction>
        <text>L-seryl-[protein] + ATP = O-phospho-L-seryl-[protein] + ADP + H(+)</text>
        <dbReference type="Rhea" id="RHEA:17989"/>
        <dbReference type="Rhea" id="RHEA-COMP:9863"/>
        <dbReference type="Rhea" id="RHEA-COMP:11604"/>
        <dbReference type="ChEBI" id="CHEBI:15378"/>
        <dbReference type="ChEBI" id="CHEBI:29999"/>
        <dbReference type="ChEBI" id="CHEBI:30616"/>
        <dbReference type="ChEBI" id="CHEBI:83421"/>
        <dbReference type="ChEBI" id="CHEBI:456216"/>
        <dbReference type="EC" id="2.7.11.25"/>
    </reaction>
</comment>
<comment type="catalytic activity">
    <reaction>
        <text>L-threonyl-[protein] + ATP = O-phospho-L-threonyl-[protein] + ADP + H(+)</text>
        <dbReference type="Rhea" id="RHEA:46608"/>
        <dbReference type="Rhea" id="RHEA-COMP:11060"/>
        <dbReference type="Rhea" id="RHEA-COMP:11605"/>
        <dbReference type="ChEBI" id="CHEBI:15378"/>
        <dbReference type="ChEBI" id="CHEBI:30013"/>
        <dbReference type="ChEBI" id="CHEBI:30616"/>
        <dbReference type="ChEBI" id="CHEBI:61977"/>
        <dbReference type="ChEBI" id="CHEBI:456216"/>
        <dbReference type="EC" id="2.7.11.25"/>
    </reaction>
</comment>
<comment type="alternative products">
    <event type="alternative splicing"/>
    <isoform>
        <id>O22040-1</id>
        <name>1L</name>
        <sequence type="displayed"/>
    </isoform>
    <isoform>
        <id>O22040-2</id>
        <name>1S</name>
        <sequence type="described" ref="VSP_010124 VSP_010125"/>
    </isoform>
</comment>
<comment type="tissue specificity">
    <text evidence="8">Expressed in roots, inflorescence stems, flower buds and flowers. Low amount in rosette and cauline leaves.</text>
</comment>
<comment type="miscellaneous">
    <text>The protein kinase activity of isoform 1S is higher than that of isoform 1L.</text>
</comment>
<comment type="similarity">
    <text evidence="10">Belongs to the protein kinase superfamily. STE Ser/Thr protein kinase family. MAP kinase kinase kinase subfamily.</text>
</comment>
<comment type="sequence caution" evidence="10">
    <conflict type="erroneous gene model prediction">
        <sequence resource="EMBL-CDS" id="AAB70419"/>
    </conflict>
</comment>
<name>ANP1_ARATH</name>
<organism>
    <name type="scientific">Arabidopsis thaliana</name>
    <name type="common">Mouse-ear cress</name>
    <dbReference type="NCBI Taxonomy" id="3702"/>
    <lineage>
        <taxon>Eukaryota</taxon>
        <taxon>Viridiplantae</taxon>
        <taxon>Streptophyta</taxon>
        <taxon>Embryophyta</taxon>
        <taxon>Tracheophyta</taxon>
        <taxon>Spermatophyta</taxon>
        <taxon>Magnoliopsida</taxon>
        <taxon>eudicotyledons</taxon>
        <taxon>Gunneridae</taxon>
        <taxon>Pentapetalae</taxon>
        <taxon>rosids</taxon>
        <taxon>malvids</taxon>
        <taxon>Brassicales</taxon>
        <taxon>Brassicaceae</taxon>
        <taxon>Camelineae</taxon>
        <taxon>Arabidopsis</taxon>
    </lineage>
</organism>
<feature type="chain" id="PRO_0000086270" description="Mitogen-activated protein kinase kinase kinase ANP1">
    <location>
        <begin position="1"/>
        <end position="666"/>
    </location>
</feature>
<feature type="domain" description="Protein kinase" evidence="3">
    <location>
        <begin position="69"/>
        <end position="331"/>
    </location>
</feature>
<feature type="region of interest" description="Disordered" evidence="5">
    <location>
        <begin position="452"/>
        <end position="481"/>
    </location>
</feature>
<feature type="region of interest" description="Disordered" evidence="5">
    <location>
        <begin position="536"/>
        <end position="592"/>
    </location>
</feature>
<feature type="region of interest" description="Disordered" evidence="5">
    <location>
        <begin position="635"/>
        <end position="666"/>
    </location>
</feature>
<feature type="coiled-coil region" evidence="2">
    <location>
        <begin position="101"/>
        <end position="131"/>
    </location>
</feature>
<feature type="coiled-coil region" evidence="2">
    <location>
        <begin position="620"/>
        <end position="643"/>
    </location>
</feature>
<feature type="compositionally biased region" description="Basic and acidic residues" evidence="5">
    <location>
        <begin position="452"/>
        <end position="464"/>
    </location>
</feature>
<feature type="compositionally biased region" description="Low complexity" evidence="5">
    <location>
        <begin position="538"/>
        <end position="558"/>
    </location>
</feature>
<feature type="compositionally biased region" description="Polar residues" evidence="5">
    <location>
        <begin position="560"/>
        <end position="569"/>
    </location>
</feature>
<feature type="compositionally biased region" description="Basic and acidic residues" evidence="5">
    <location>
        <begin position="647"/>
        <end position="660"/>
    </location>
</feature>
<feature type="active site" description="Proton acceptor" evidence="3 4">
    <location>
        <position position="197"/>
    </location>
</feature>
<feature type="binding site" evidence="3">
    <location>
        <begin position="75"/>
        <end position="83"/>
    </location>
    <ligand>
        <name>ATP</name>
        <dbReference type="ChEBI" id="CHEBI:30616"/>
    </ligand>
</feature>
<feature type="binding site" evidence="3">
    <location>
        <position position="98"/>
    </location>
    <ligand>
        <name>ATP</name>
        <dbReference type="ChEBI" id="CHEBI:30616"/>
    </ligand>
</feature>
<feature type="cross-link" description="Glycyl lysine isopeptide (Lys-Gly) (interchain with G-Cter in ubiquitin)" evidence="1">
    <location>
        <position position="109"/>
    </location>
</feature>
<feature type="cross-link" description="Glycyl lysine isopeptide (Lys-Gly) (interchain with G-Cter in ubiquitin)" evidence="1">
    <location>
        <position position="111"/>
    </location>
</feature>
<feature type="splice variant" id="VSP_010124" description="In isoform 1S." evidence="9">
    <original>VGDMC</original>
    <variation>MMRIS</variation>
    <location>
        <begin position="372"/>
        <end position="376"/>
    </location>
</feature>
<feature type="splice variant" id="VSP_010125" description="In isoform 1S." evidence="9">
    <location>
        <begin position="377"/>
        <end position="666"/>
    </location>
</feature>
<feature type="mutagenesis site" description="Loss of kinase activity." evidence="6">
    <original>K</original>
    <variation>M</variation>
    <location>
        <position position="98"/>
    </location>
</feature>
<sequence length="666" mass="73470">MQDFFGSVRRSLVFRPSSDDDNQENQPPFPGVLADKITSCIRKSKIFIKPSFSPPPPANTVDMAPPISWRKGQLIGRGAFGTVYMGMNLDSGELLAVKQVLIAANFASKEKTQAHIQELEEEVKLLKNLSHPNIVRYLGTVREDDTLNILLEFVPGGSISSLLEKFGPFPESVVRTYTRQLLLGLEYLHNHAIMHRDIKGANILVDNKGCIKLADFGASKQVAELATMTGAKSMKGTPYWMAPEVILQTGHSFSADIWSVGCTVIEMVTGKAPWSQQYKEVAAIFFIGTTKSHPPIPDTLSSDAKDFLLKCLQEVPNLRPTASELLKHPFVMGKHKESASTDLGSVLNNLSTPLPLQINNTKSTPDSTCDDVGDMCNFGSLNYSLVDPVKSIQNKNLWQQNDNGGDEDDMCLIDDENFLTFDGEMSSTLEKDCHLKKSCDDISDMSIALKSKFDESPGNGEKESTMSMECDQPSYSEDDDELTESKIKAFLDEKAADLKKLQTPLYEEFYNSLITFSPSCMESNLSNSKREDTARGFLKLPPKSRSPSRGPLGGSPSRATDATSCSKSPGSGGSRELNINNGGDEASQDGVSARVTDWRGLVVDTKQELSQCVALSEIEKKWKEELDQELERKRQEIMRQAGLGSSPRDRGMSRQREKSRFASPGK</sequence>